<evidence type="ECO:0000250" key="1">
    <source>
        <dbReference type="UniProtKB" id="Q0VAA5"/>
    </source>
</evidence>
<evidence type="ECO:0000255" key="2">
    <source>
        <dbReference type="PROSITE-ProRule" id="PRU00270"/>
    </source>
</evidence>
<evidence type="ECO:0000269" key="3">
    <source>
    </source>
</evidence>
<evidence type="ECO:0000303" key="4">
    <source>
    </source>
</evidence>
<accession>B2RXA1</accession>
<feature type="chain" id="PRO_0000437755" description="PI-PLC X domain-containing protein 2">
    <location>
        <begin position="1"/>
        <end position="340"/>
    </location>
</feature>
<feature type="domain" description="PI-PLC X-box" evidence="2">
    <location>
        <begin position="42"/>
        <end position="215"/>
    </location>
</feature>
<feature type="active site" evidence="2">
    <location>
        <position position="57"/>
    </location>
</feature>
<feature type="active site" evidence="2">
    <location>
        <position position="132"/>
    </location>
</feature>
<comment type="function">
    <text evidence="1">Catalyzes the hydrolysis of inositol from phosphatidylinositol (1,2-diacyl-sn-glycero-3-phospho-(1D-myo-inositol), PI). Could also hydrolyze various multi-phosphorylated derivatives of PI, such as phosphatidylinositol-4,5 bisphosphate (PIP2), releasing inositol-1,4,5-trisphosphate (IP3) and the protein kinase C activator diacylglycerol (DAG), therefore mediating cell signaling.</text>
</comment>
<comment type="catalytic activity">
    <reaction evidence="1">
        <text>a 1,2-diacyl-sn-glycero-3-phospho-(1D-myo-inositol) + H2O = 1D-myo-inositol 1-phosphate + a 1,2-diacyl-sn-glycerol + H(+)</text>
        <dbReference type="Rhea" id="RHEA:43484"/>
        <dbReference type="ChEBI" id="CHEBI:15377"/>
        <dbReference type="ChEBI" id="CHEBI:15378"/>
        <dbReference type="ChEBI" id="CHEBI:17815"/>
        <dbReference type="ChEBI" id="CHEBI:57880"/>
        <dbReference type="ChEBI" id="CHEBI:58433"/>
    </reaction>
    <physiologicalReaction direction="left-to-right" evidence="1">
        <dbReference type="Rhea" id="RHEA:43485"/>
    </physiologicalReaction>
</comment>
<comment type="subcellular location">
    <subcellularLocation>
        <location evidence="1">Nucleus</location>
    </subcellularLocation>
</comment>
<comment type="tissue specificity">
    <text evidence="3">Expressed at highest levels in brain, followed by stomach and small intestine. Detected at low levels in kidney, ey, thymus and slkeletal muscle.</text>
</comment>
<keyword id="KW-0378">Hydrolase</keyword>
<keyword id="KW-0442">Lipid degradation</keyword>
<keyword id="KW-0443">Lipid metabolism</keyword>
<keyword id="KW-0539">Nucleus</keyword>
<keyword id="KW-1185">Reference proteome</keyword>
<keyword id="KW-0807">Transducer</keyword>
<dbReference type="EMBL" id="AC154773">
    <property type="status" value="NOT_ANNOTATED_CDS"/>
    <property type="molecule type" value="Genomic_DNA"/>
</dbReference>
<dbReference type="EMBL" id="AC164979">
    <property type="status" value="NOT_ANNOTATED_CDS"/>
    <property type="molecule type" value="Genomic_DNA"/>
</dbReference>
<dbReference type="EMBL" id="BC151059">
    <property type="protein sequence ID" value="AAI51060.1"/>
    <property type="molecule type" value="mRNA"/>
</dbReference>
<dbReference type="EMBL" id="BC151063">
    <property type="protein sequence ID" value="AAI51064.1"/>
    <property type="molecule type" value="mRNA"/>
</dbReference>
<dbReference type="CCDS" id="CCDS49863.1"/>
<dbReference type="RefSeq" id="NP_001127952.1">
    <property type="nucleotide sequence ID" value="NM_001134480.1"/>
</dbReference>
<dbReference type="SMR" id="B2RXA1"/>
<dbReference type="FunCoup" id="B2RXA1">
    <property type="interactions" value="24"/>
</dbReference>
<dbReference type="STRING" id="10090.ENSMUSP00000114852"/>
<dbReference type="GlyGen" id="B2RXA1">
    <property type="glycosylation" value="1 site, 1 N-linked glycan (1 site)"/>
</dbReference>
<dbReference type="iPTMnet" id="B2RXA1"/>
<dbReference type="PhosphoSitePlus" id="B2RXA1"/>
<dbReference type="PaxDb" id="10090-ENSMUSP00000114852"/>
<dbReference type="ProteomicsDB" id="289617"/>
<dbReference type="Antibodypedia" id="64569">
    <property type="antibodies" value="90 antibodies from 18 providers"/>
</dbReference>
<dbReference type="Ensembl" id="ENSMUST00000130481.2">
    <property type="protein sequence ID" value="ENSMUSP00000114852.2"/>
    <property type="gene ID" value="ENSMUSG00000087141.2"/>
</dbReference>
<dbReference type="GeneID" id="433022"/>
<dbReference type="KEGG" id="mmu:433022"/>
<dbReference type="UCSC" id="uc007zje.2">
    <property type="organism name" value="mouse"/>
</dbReference>
<dbReference type="AGR" id="MGI:3647874"/>
<dbReference type="CTD" id="257068"/>
<dbReference type="MGI" id="MGI:3647874">
    <property type="gene designation" value="Plcxd2"/>
</dbReference>
<dbReference type="VEuPathDB" id="HostDB:ENSMUSG00000087141"/>
<dbReference type="eggNOG" id="KOG4306">
    <property type="taxonomic scope" value="Eukaryota"/>
</dbReference>
<dbReference type="GeneTree" id="ENSGT00940000162182"/>
<dbReference type="HOGENOM" id="CLU_051926_0_0_1"/>
<dbReference type="InParanoid" id="B2RXA1"/>
<dbReference type="OMA" id="NHFYAME"/>
<dbReference type="OrthoDB" id="1046782at2759"/>
<dbReference type="PhylomeDB" id="B2RXA1"/>
<dbReference type="TreeFam" id="TF314457"/>
<dbReference type="BioGRID-ORCS" id="433022">
    <property type="hits" value="2 hits in 79 CRISPR screens"/>
</dbReference>
<dbReference type="ChiTaRS" id="Plcxd2">
    <property type="organism name" value="mouse"/>
</dbReference>
<dbReference type="PRO" id="PR:B2RXA1"/>
<dbReference type="Proteomes" id="UP000000589">
    <property type="component" value="Chromosome 16"/>
</dbReference>
<dbReference type="RNAct" id="B2RXA1">
    <property type="molecule type" value="protein"/>
</dbReference>
<dbReference type="Bgee" id="ENSMUSG00000087141">
    <property type="expression patterns" value="Expressed in inferior colliculus and 228 other cell types or tissues"/>
</dbReference>
<dbReference type="GO" id="GO:0005634">
    <property type="term" value="C:nucleus"/>
    <property type="evidence" value="ECO:0007669"/>
    <property type="project" value="UniProtKB-SubCell"/>
</dbReference>
<dbReference type="GO" id="GO:0008081">
    <property type="term" value="F:phosphoric diester hydrolase activity"/>
    <property type="evidence" value="ECO:0007669"/>
    <property type="project" value="InterPro"/>
</dbReference>
<dbReference type="GO" id="GO:0016042">
    <property type="term" value="P:lipid catabolic process"/>
    <property type="evidence" value="ECO:0007669"/>
    <property type="project" value="UniProtKB-KW"/>
</dbReference>
<dbReference type="GO" id="GO:0007165">
    <property type="term" value="P:signal transduction"/>
    <property type="evidence" value="ECO:0007669"/>
    <property type="project" value="UniProtKB-KW"/>
</dbReference>
<dbReference type="CDD" id="cd08616">
    <property type="entry name" value="PI-PLCXD1c"/>
    <property type="match status" value="1"/>
</dbReference>
<dbReference type="FunFam" id="3.20.20.190:FF:000021">
    <property type="entry name" value="PI-PLC X domain-containing protein 3"/>
    <property type="match status" value="1"/>
</dbReference>
<dbReference type="Gene3D" id="3.20.20.190">
    <property type="entry name" value="Phosphatidylinositol (PI) phosphodiesterase"/>
    <property type="match status" value="1"/>
</dbReference>
<dbReference type="InterPro" id="IPR051057">
    <property type="entry name" value="PI-PLC_domain"/>
</dbReference>
<dbReference type="InterPro" id="IPR017946">
    <property type="entry name" value="PLC-like_Pdiesterase_TIM-brl"/>
</dbReference>
<dbReference type="InterPro" id="IPR042158">
    <property type="entry name" value="PLCXD1/2/3"/>
</dbReference>
<dbReference type="InterPro" id="IPR000909">
    <property type="entry name" value="PLipase_C_PInositol-sp_X_dom"/>
</dbReference>
<dbReference type="PANTHER" id="PTHR13593">
    <property type="match status" value="1"/>
</dbReference>
<dbReference type="PANTHER" id="PTHR13593:SF32">
    <property type="entry name" value="PI-PLC X DOMAIN-CONTAINING PROTEIN 2"/>
    <property type="match status" value="1"/>
</dbReference>
<dbReference type="SMART" id="SM00148">
    <property type="entry name" value="PLCXc"/>
    <property type="match status" value="1"/>
</dbReference>
<dbReference type="SUPFAM" id="SSF51695">
    <property type="entry name" value="PLC-like phosphodiesterases"/>
    <property type="match status" value="1"/>
</dbReference>
<dbReference type="PROSITE" id="PS50007">
    <property type="entry name" value="PIPLC_X_DOMAIN"/>
    <property type="match status" value="1"/>
</dbReference>
<organism>
    <name type="scientific">Mus musculus</name>
    <name type="common">Mouse</name>
    <dbReference type="NCBI Taxonomy" id="10090"/>
    <lineage>
        <taxon>Eukaryota</taxon>
        <taxon>Metazoa</taxon>
        <taxon>Chordata</taxon>
        <taxon>Craniata</taxon>
        <taxon>Vertebrata</taxon>
        <taxon>Euteleostomi</taxon>
        <taxon>Mammalia</taxon>
        <taxon>Eutheria</taxon>
        <taxon>Euarchontoglires</taxon>
        <taxon>Glires</taxon>
        <taxon>Rodentia</taxon>
        <taxon>Myomorpha</taxon>
        <taxon>Muroidea</taxon>
        <taxon>Muridae</taxon>
        <taxon>Murinae</taxon>
        <taxon>Mus</taxon>
        <taxon>Mus</taxon>
    </lineage>
</organism>
<proteinExistence type="evidence at transcript level"/>
<reference key="1">
    <citation type="journal article" date="2009" name="PLoS Biol.">
        <title>Lineage-specific biology revealed by a finished genome assembly of the mouse.</title>
        <authorList>
            <person name="Church D.M."/>
            <person name="Goodstadt L."/>
            <person name="Hillier L.W."/>
            <person name="Zody M.C."/>
            <person name="Goldstein S."/>
            <person name="She X."/>
            <person name="Bult C.J."/>
            <person name="Agarwala R."/>
            <person name="Cherry J.L."/>
            <person name="DiCuccio M."/>
            <person name="Hlavina W."/>
            <person name="Kapustin Y."/>
            <person name="Meric P."/>
            <person name="Maglott D."/>
            <person name="Birtle Z."/>
            <person name="Marques A.C."/>
            <person name="Graves T."/>
            <person name="Zhou S."/>
            <person name="Teague B."/>
            <person name="Potamousis K."/>
            <person name="Churas C."/>
            <person name="Place M."/>
            <person name="Herschleb J."/>
            <person name="Runnheim R."/>
            <person name="Forrest D."/>
            <person name="Amos-Landgraf J."/>
            <person name="Schwartz D.C."/>
            <person name="Cheng Z."/>
            <person name="Lindblad-Toh K."/>
            <person name="Eichler E.E."/>
            <person name="Ponting C.P."/>
        </authorList>
    </citation>
    <scope>NUCLEOTIDE SEQUENCE [LARGE SCALE GENOMIC DNA]</scope>
    <source>
        <strain>C57BL/6J</strain>
    </source>
</reference>
<reference key="2">
    <citation type="journal article" date="2004" name="Genome Res.">
        <title>The status, quality, and expansion of the NIH full-length cDNA project: the Mammalian Gene Collection (MGC).</title>
        <authorList>
            <consortium name="The MGC Project Team"/>
        </authorList>
    </citation>
    <scope>NUCLEOTIDE SEQUENCE [LARGE SCALE MRNA]</scope>
    <source>
        <tissue>Brain</tissue>
    </source>
</reference>
<reference key="3">
    <citation type="journal article" date="2012" name="Biochem. Biophys. Res. Commun.">
        <title>Cloning, tissue distribution and sub-cellular localisation of phospholipase C X-domain containing protein (PLCXD) isoforms.</title>
        <authorList>
            <person name="Gellatly S.A."/>
            <person name="Kalujnaia S."/>
            <person name="Cramb G."/>
        </authorList>
    </citation>
    <scope>TISSUE SPECIFICITY</scope>
</reference>
<gene>
    <name type="primary">Plcxd2</name>
</gene>
<name>PLCX2_MOUSE</name>
<protein>
    <recommendedName>
        <fullName evidence="4">PI-PLC X domain-containing protein 2</fullName>
    </recommendedName>
    <alternativeName>
        <fullName>Phospholipase C X-domain containing protein 2</fullName>
        <shortName evidence="4">PLCXD-2</shortName>
    </alternativeName>
</protein>
<sequence length="340" mass="38618">MLAFRKARRKLRMGTICSPNPSGTKTASEVCNADWMASLPAHLHNVPLSNLAIPGSHDSFSYWVDEKSPVGPDQTQAVIRLARISLVKKLMKKWSVTQNLTFREQLEAGIRYFDLRVSSKPGDTDQEIYFIHGLFGIKVWDGLMEIDAFLTQHPQEIIFLDFNHFYAMDESHHKCLVLRIQEAFGNKLCPACSVESMTLRSLWEKKYQVLIFYHCPFYKQYPFLWPGKKIPAPWANTTSVQKLILFLETTLSERAPRGAFHVSQAILTPRVKTIARGLVGGLKNTLVHRNLPAILDWVKTQKPGAMGVNIITSDFVDLIDFATTVIELNDLLEDRALTKC</sequence>